<reference key="1">
    <citation type="journal article" date="2008" name="Chem. Biol. Interact.">
        <title>Extending the Bacillus cereus group genomics to putative food-borne pathogens of different toxicity.</title>
        <authorList>
            <person name="Lapidus A."/>
            <person name="Goltsman E."/>
            <person name="Auger S."/>
            <person name="Galleron N."/>
            <person name="Segurens B."/>
            <person name="Dossat C."/>
            <person name="Land M.L."/>
            <person name="Broussolle V."/>
            <person name="Brillard J."/>
            <person name="Guinebretiere M.-H."/>
            <person name="Sanchis V."/>
            <person name="Nguen-the C."/>
            <person name="Lereclus D."/>
            <person name="Richardson P."/>
            <person name="Wincker P."/>
            <person name="Weissenbach J."/>
            <person name="Ehrlich S.D."/>
            <person name="Sorokin A."/>
        </authorList>
    </citation>
    <scope>NUCLEOTIDE SEQUENCE [LARGE SCALE GENOMIC DNA]</scope>
    <source>
        <strain>KBAB4</strain>
    </source>
</reference>
<evidence type="ECO:0000255" key="1">
    <source>
        <dbReference type="HAMAP-Rule" id="MF_01614"/>
    </source>
</evidence>
<gene>
    <name evidence="1" type="primary">namA</name>
    <name type="ordered locus">BcerKBAB4_1888</name>
</gene>
<comment type="function">
    <text evidence="1">Catalyzes the reduction of the double bond of an array of alpha,beta-unsaturated aldehydes and ketones. It also reduces the nitro group of nitroester and nitroaromatic compounds. It could have a role in detoxification processes.</text>
</comment>
<comment type="catalytic activity">
    <reaction evidence="1">
        <text>A + NADPH + H(+) = AH2 + NADP(+)</text>
        <dbReference type="Rhea" id="RHEA:13149"/>
        <dbReference type="ChEBI" id="CHEBI:13193"/>
        <dbReference type="ChEBI" id="CHEBI:15378"/>
        <dbReference type="ChEBI" id="CHEBI:17499"/>
        <dbReference type="ChEBI" id="CHEBI:57783"/>
        <dbReference type="ChEBI" id="CHEBI:58349"/>
        <dbReference type="EC" id="1.6.99.1"/>
    </reaction>
</comment>
<comment type="cofactor">
    <cofactor evidence="1">
        <name>FMN</name>
        <dbReference type="ChEBI" id="CHEBI:58210"/>
    </cofactor>
</comment>
<comment type="subunit">
    <text evidence="1">Homotetramer.</text>
</comment>
<comment type="similarity">
    <text evidence="1">Belongs to the NADH:flavin oxidoreductase/NADH oxidase family. NamA subfamily.</text>
</comment>
<feature type="chain" id="PRO_1000185864" description="NADPH dehydrogenase">
    <location>
        <begin position="1"/>
        <end position="345"/>
    </location>
</feature>
<feature type="binding site" evidence="1">
    <location>
        <begin position="23"/>
        <end position="26"/>
    </location>
    <ligand>
        <name>FMN</name>
        <dbReference type="ChEBI" id="CHEBI:58210"/>
    </ligand>
</feature>
<feature type="binding site" evidence="1">
    <location>
        <position position="28"/>
    </location>
    <ligand>
        <name>substrate</name>
    </ligand>
</feature>
<feature type="binding site" evidence="1">
    <location>
        <position position="60"/>
    </location>
    <ligand>
        <name>FMN</name>
        <dbReference type="ChEBI" id="CHEBI:58210"/>
    </ligand>
</feature>
<feature type="binding site" evidence="1">
    <location>
        <position position="102"/>
    </location>
    <ligand>
        <name>FMN</name>
        <dbReference type="ChEBI" id="CHEBI:58210"/>
    </ligand>
</feature>
<feature type="binding site" evidence="1">
    <location>
        <begin position="164"/>
        <end position="167"/>
    </location>
    <ligand>
        <name>substrate</name>
    </ligand>
</feature>
<feature type="binding site" evidence="1">
    <location>
        <position position="215"/>
    </location>
    <ligand>
        <name>FMN</name>
        <dbReference type="ChEBI" id="CHEBI:58210"/>
    </ligand>
</feature>
<feature type="binding site" evidence="1">
    <location>
        <begin position="307"/>
        <end position="308"/>
    </location>
    <ligand>
        <name>FMN</name>
        <dbReference type="ChEBI" id="CHEBI:58210"/>
    </ligand>
</feature>
<sequence length="345" mass="38665">MEFQLFSPYTIKDVTLKNRIIMSPMCMYSSENEDGQVTNFHLVHYGTRAAGQVGLVMIEATAVLPEGRISNKDLGIWDDNLIEGLHKTTTFIHNNGAKAAIQLAHAGRKAELETDAFAPSAIPFNDRMKIPVEMNKQQIKETVSAFQKAALRSKRAGVDVIELHGAHGYLINEFLSPLSNKRIDEYGGSPENRYRFLREIIDAVNEVWNGPLFVRISANDYHPDGLTVQDYVQYTGWMKEQGVDLIDCSSGAVVPAHIDVYPGYQVQYAKHIKEHVNIATGAVGLITTGSQAEQILNNNEADLIFIGRELLRNPYFPRIAANELGFELKEPYQYRRAPGKIKTNK</sequence>
<protein>
    <recommendedName>
        <fullName evidence="1">NADPH dehydrogenase</fullName>
        <ecNumber evidence="1">1.6.99.1</ecNumber>
    </recommendedName>
</protein>
<keyword id="KW-0216">Detoxification</keyword>
<keyword id="KW-0285">Flavoprotein</keyword>
<keyword id="KW-0288">FMN</keyword>
<keyword id="KW-0521">NADP</keyword>
<keyword id="KW-0560">Oxidoreductase</keyword>
<proteinExistence type="inferred from homology"/>
<accession>A9VRT5</accession>
<name>NAMA_BACMK</name>
<organism>
    <name type="scientific">Bacillus mycoides (strain KBAB4)</name>
    <name type="common">Bacillus weihenstephanensis</name>
    <dbReference type="NCBI Taxonomy" id="315730"/>
    <lineage>
        <taxon>Bacteria</taxon>
        <taxon>Bacillati</taxon>
        <taxon>Bacillota</taxon>
        <taxon>Bacilli</taxon>
        <taxon>Bacillales</taxon>
        <taxon>Bacillaceae</taxon>
        <taxon>Bacillus</taxon>
        <taxon>Bacillus cereus group</taxon>
    </lineage>
</organism>
<dbReference type="EC" id="1.6.99.1" evidence="1"/>
<dbReference type="EMBL" id="CP000903">
    <property type="protein sequence ID" value="ABY43120.1"/>
    <property type="molecule type" value="Genomic_DNA"/>
</dbReference>
<dbReference type="RefSeq" id="WP_002193078.1">
    <property type="nucleotide sequence ID" value="NC_010184.1"/>
</dbReference>
<dbReference type="SMR" id="A9VRT5"/>
<dbReference type="KEGG" id="bwe:BcerKBAB4_1888"/>
<dbReference type="eggNOG" id="COG1902">
    <property type="taxonomic scope" value="Bacteria"/>
</dbReference>
<dbReference type="HOGENOM" id="CLU_012153_2_1_9"/>
<dbReference type="Proteomes" id="UP000002154">
    <property type="component" value="Chromosome"/>
</dbReference>
<dbReference type="GO" id="GO:0010181">
    <property type="term" value="F:FMN binding"/>
    <property type="evidence" value="ECO:0007669"/>
    <property type="project" value="UniProtKB-UniRule"/>
</dbReference>
<dbReference type="GO" id="GO:0050661">
    <property type="term" value="F:NADP binding"/>
    <property type="evidence" value="ECO:0007669"/>
    <property type="project" value="UniProtKB-UniRule"/>
</dbReference>
<dbReference type="GO" id="GO:0003959">
    <property type="term" value="F:NADPH dehydrogenase activity"/>
    <property type="evidence" value="ECO:0007669"/>
    <property type="project" value="UniProtKB-UniRule"/>
</dbReference>
<dbReference type="GO" id="GO:0009636">
    <property type="term" value="P:response to toxic substance"/>
    <property type="evidence" value="ECO:0007669"/>
    <property type="project" value="UniProtKB-KW"/>
</dbReference>
<dbReference type="CDD" id="cd02932">
    <property type="entry name" value="OYE_YqiM_FMN"/>
    <property type="match status" value="1"/>
</dbReference>
<dbReference type="Gene3D" id="3.20.20.70">
    <property type="entry name" value="Aldolase class I"/>
    <property type="match status" value="1"/>
</dbReference>
<dbReference type="HAMAP" id="MF_01614">
    <property type="entry name" value="NamA"/>
    <property type="match status" value="1"/>
</dbReference>
<dbReference type="InterPro" id="IPR013785">
    <property type="entry name" value="Aldolase_TIM"/>
</dbReference>
<dbReference type="InterPro" id="IPR023663">
    <property type="entry name" value="NADPH_DH_bac"/>
</dbReference>
<dbReference type="InterPro" id="IPR001155">
    <property type="entry name" value="OxRdtase_FMN_N"/>
</dbReference>
<dbReference type="InterPro" id="IPR044152">
    <property type="entry name" value="YqjM-like"/>
</dbReference>
<dbReference type="NCBIfam" id="NF010047">
    <property type="entry name" value="PRK13523.1"/>
    <property type="match status" value="1"/>
</dbReference>
<dbReference type="PANTHER" id="PTHR43303">
    <property type="entry name" value="NADPH DEHYDROGENASE C23G7.10C-RELATED"/>
    <property type="match status" value="1"/>
</dbReference>
<dbReference type="PANTHER" id="PTHR43303:SF4">
    <property type="entry name" value="NADPH DEHYDROGENASE C23G7.10C-RELATED"/>
    <property type="match status" value="1"/>
</dbReference>
<dbReference type="Pfam" id="PF00724">
    <property type="entry name" value="Oxidored_FMN"/>
    <property type="match status" value="1"/>
</dbReference>
<dbReference type="SUPFAM" id="SSF51395">
    <property type="entry name" value="FMN-linked oxidoreductases"/>
    <property type="match status" value="1"/>
</dbReference>